<comment type="function">
    <text evidence="1">Mitochondrial solute carriers shuttle metabolites, nucleotides, and cofactors through the mitochondrial inner membrane.</text>
</comment>
<comment type="subcellular location">
    <subcellularLocation>
        <location evidence="1">Mitochondrion inner membrane</location>
        <topology evidence="1">Multi-pass membrane protein</topology>
    </subcellularLocation>
</comment>
<comment type="similarity">
    <text evidence="3">Belongs to the mitochondrial carrier (TC 2.A.29) family.</text>
</comment>
<keyword id="KW-0472">Membrane</keyword>
<keyword id="KW-0496">Mitochondrion</keyword>
<keyword id="KW-0999">Mitochondrion inner membrane</keyword>
<keyword id="KW-1185">Reference proteome</keyword>
<keyword id="KW-0677">Repeat</keyword>
<keyword id="KW-0812">Transmembrane</keyword>
<keyword id="KW-1133">Transmembrane helix</keyword>
<keyword id="KW-0813">Transport</keyword>
<feature type="chain" id="PRO_0000385530" description="Mitochondrial substrate carrier family protein X">
    <location>
        <begin position="1"/>
        <end position="301"/>
    </location>
</feature>
<feature type="topological domain" description="Mitochondrial intermembrane" evidence="1">
    <location>
        <begin position="1"/>
        <end position="23"/>
    </location>
</feature>
<feature type="transmembrane region" description="Helical; Name=1" evidence="2">
    <location>
        <begin position="24"/>
        <end position="44"/>
    </location>
</feature>
<feature type="topological domain" description="Mitochondrial matrix" evidence="1">
    <location>
        <begin position="45"/>
        <end position="75"/>
    </location>
</feature>
<feature type="transmembrane region" description="Helical; Name=2" evidence="2">
    <location>
        <begin position="76"/>
        <end position="97"/>
    </location>
</feature>
<feature type="topological domain" description="Mitochondrial intermembrane" evidence="1">
    <location>
        <begin position="98"/>
        <end position="122"/>
    </location>
</feature>
<feature type="transmembrane region" description="Helical; Name=3" evidence="2">
    <location>
        <begin position="123"/>
        <end position="143"/>
    </location>
</feature>
<feature type="topological domain" description="Mitochondrial matrix" evidence="1">
    <location>
        <begin position="144"/>
        <end position="173"/>
    </location>
</feature>
<feature type="transmembrane region" description="Helical; Name=4" evidence="2">
    <location>
        <begin position="174"/>
        <end position="194"/>
    </location>
</feature>
<feature type="topological domain" description="Mitochondrial intermembrane" evidence="1">
    <location>
        <begin position="195"/>
        <end position="207"/>
    </location>
</feature>
<feature type="transmembrane region" description="Helical; Name=5" evidence="2">
    <location>
        <begin position="208"/>
        <end position="228"/>
    </location>
</feature>
<feature type="topological domain" description="Mitochondrial matrix" evidence="1">
    <location>
        <begin position="229"/>
        <end position="271"/>
    </location>
</feature>
<feature type="transmembrane region" description="Helical; Name=6" evidence="2">
    <location>
        <begin position="272"/>
        <end position="292"/>
    </location>
</feature>
<feature type="topological domain" description="Mitochondrial intermembrane" evidence="1">
    <location>
        <begin position="293"/>
        <end position="301"/>
    </location>
</feature>
<feature type="repeat" description="Solcar 1">
    <location>
        <begin position="18"/>
        <end position="109"/>
    </location>
</feature>
<feature type="repeat" description="Solcar 2">
    <location>
        <begin position="117"/>
        <end position="199"/>
    </location>
</feature>
<feature type="repeat" description="Solcar 3">
    <location>
        <begin position="208"/>
        <end position="296"/>
    </location>
</feature>
<organism>
    <name type="scientific">Dictyostelium discoideum</name>
    <name type="common">Social amoeba</name>
    <dbReference type="NCBI Taxonomy" id="44689"/>
    <lineage>
        <taxon>Eukaryota</taxon>
        <taxon>Amoebozoa</taxon>
        <taxon>Evosea</taxon>
        <taxon>Eumycetozoa</taxon>
        <taxon>Dictyostelia</taxon>
        <taxon>Dictyosteliales</taxon>
        <taxon>Dictyosteliaceae</taxon>
        <taxon>Dictyostelium</taxon>
    </lineage>
</organism>
<evidence type="ECO:0000250" key="1"/>
<evidence type="ECO:0000255" key="2"/>
<evidence type="ECO:0000305" key="3"/>
<gene>
    <name type="primary">mcfX</name>
    <name type="ORF">DDB_G0276933</name>
</gene>
<reference key="1">
    <citation type="journal article" date="2002" name="Nature">
        <title>Sequence and analysis of chromosome 2 of Dictyostelium discoideum.</title>
        <authorList>
            <person name="Gloeckner G."/>
            <person name="Eichinger L."/>
            <person name="Szafranski K."/>
            <person name="Pachebat J.A."/>
            <person name="Bankier A.T."/>
            <person name="Dear P.H."/>
            <person name="Lehmann R."/>
            <person name="Baumgart C."/>
            <person name="Parra G."/>
            <person name="Abril J.F."/>
            <person name="Guigo R."/>
            <person name="Kumpf K."/>
            <person name="Tunggal B."/>
            <person name="Cox E.C."/>
            <person name="Quail M.A."/>
            <person name="Platzer M."/>
            <person name="Rosenthal A."/>
            <person name="Noegel A.A."/>
        </authorList>
    </citation>
    <scope>NUCLEOTIDE SEQUENCE [LARGE SCALE GENOMIC DNA]</scope>
    <source>
        <strain>AX4</strain>
    </source>
</reference>
<reference key="2">
    <citation type="journal article" date="2005" name="Nature">
        <title>The genome of the social amoeba Dictyostelium discoideum.</title>
        <authorList>
            <person name="Eichinger L."/>
            <person name="Pachebat J.A."/>
            <person name="Gloeckner G."/>
            <person name="Rajandream M.A."/>
            <person name="Sucgang R."/>
            <person name="Berriman M."/>
            <person name="Song J."/>
            <person name="Olsen R."/>
            <person name="Szafranski K."/>
            <person name="Xu Q."/>
            <person name="Tunggal B."/>
            <person name="Kummerfeld S."/>
            <person name="Madera M."/>
            <person name="Konfortov B.A."/>
            <person name="Rivero F."/>
            <person name="Bankier A.T."/>
            <person name="Lehmann R."/>
            <person name="Hamlin N."/>
            <person name="Davies R."/>
            <person name="Gaudet P."/>
            <person name="Fey P."/>
            <person name="Pilcher K."/>
            <person name="Chen G."/>
            <person name="Saunders D."/>
            <person name="Sodergren E.J."/>
            <person name="Davis P."/>
            <person name="Kerhornou A."/>
            <person name="Nie X."/>
            <person name="Hall N."/>
            <person name="Anjard C."/>
            <person name="Hemphill L."/>
            <person name="Bason N."/>
            <person name="Farbrother P."/>
            <person name="Desany B."/>
            <person name="Just E."/>
            <person name="Morio T."/>
            <person name="Rost R."/>
            <person name="Churcher C.M."/>
            <person name="Cooper J."/>
            <person name="Haydock S."/>
            <person name="van Driessche N."/>
            <person name="Cronin A."/>
            <person name="Goodhead I."/>
            <person name="Muzny D.M."/>
            <person name="Mourier T."/>
            <person name="Pain A."/>
            <person name="Lu M."/>
            <person name="Harper D."/>
            <person name="Lindsay R."/>
            <person name="Hauser H."/>
            <person name="James K.D."/>
            <person name="Quiles M."/>
            <person name="Madan Babu M."/>
            <person name="Saito T."/>
            <person name="Buchrieser C."/>
            <person name="Wardroper A."/>
            <person name="Felder M."/>
            <person name="Thangavelu M."/>
            <person name="Johnson D."/>
            <person name="Knights A."/>
            <person name="Loulseged H."/>
            <person name="Mungall K.L."/>
            <person name="Oliver K."/>
            <person name="Price C."/>
            <person name="Quail M.A."/>
            <person name="Urushihara H."/>
            <person name="Hernandez J."/>
            <person name="Rabbinowitsch E."/>
            <person name="Steffen D."/>
            <person name="Sanders M."/>
            <person name="Ma J."/>
            <person name="Kohara Y."/>
            <person name="Sharp S."/>
            <person name="Simmonds M.N."/>
            <person name="Spiegler S."/>
            <person name="Tivey A."/>
            <person name="Sugano S."/>
            <person name="White B."/>
            <person name="Walker D."/>
            <person name="Woodward J.R."/>
            <person name="Winckler T."/>
            <person name="Tanaka Y."/>
            <person name="Shaulsky G."/>
            <person name="Schleicher M."/>
            <person name="Weinstock G.M."/>
            <person name="Rosenthal A."/>
            <person name="Cox E.C."/>
            <person name="Chisholm R.L."/>
            <person name="Gibbs R.A."/>
            <person name="Loomis W.F."/>
            <person name="Platzer M."/>
            <person name="Kay R.R."/>
            <person name="Williams J.G."/>
            <person name="Dear P.H."/>
            <person name="Noegel A.A."/>
            <person name="Barrell B.G."/>
            <person name="Kuspa A."/>
        </authorList>
    </citation>
    <scope>NUCLEOTIDE SEQUENCE [LARGE SCALE GENOMIC DNA]</scope>
    <source>
        <strain>AX4</strain>
    </source>
</reference>
<reference key="3">
    <citation type="journal article" date="2007" name="Biochimie">
        <title>Mitochondrial carrier family: repertoire and peculiarities of the cellular slime mould Dictyostelium discoideum.</title>
        <authorList>
            <person name="Satre M."/>
            <person name="Mattei S."/>
            <person name="Aubry L."/>
            <person name="Gaudet P."/>
            <person name="Pelosi L."/>
            <person name="Brandolin G."/>
            <person name="Klein G."/>
        </authorList>
    </citation>
    <scope>REVIEW</scope>
</reference>
<name>MCFX_DICDI</name>
<accession>Q86AV5</accession>
<accession>Q550V7</accession>
<sequence length="301" mass="33093">MVQQQQQQQQIKKNQVKPPLYSNLIAGAIAGVIGSSVVFPLDFVKTRLQQQRVSIDGSKQYNGIIDCFKKVIKNEGGVRGLYRGLSSNLIGIIPEKALKLAMNDYFRTRFQGDRSYIKLWEEVASGGLAGMCQVVATNPMELVKIRMQVSGLSGKKASLKEVVSELGIKGLYKGTASTLLRDVPFSMIYFSIYGRMKHNLTDQETGEIGLPKILLCGITAGSIAASVSTPFDVIKTRIQVKPGPNDPHYKGIADCFRKTIQSEGPKALFKGVLPRVCIISPLFGITLVVYEIQKSFYASTH</sequence>
<proteinExistence type="inferred from homology"/>
<dbReference type="EMBL" id="AAFI02000019">
    <property type="protein sequence ID" value="EAL68968.1"/>
    <property type="molecule type" value="Genomic_DNA"/>
</dbReference>
<dbReference type="RefSeq" id="XP_642825.1">
    <property type="nucleotide sequence ID" value="XM_637733.1"/>
</dbReference>
<dbReference type="SMR" id="Q86AV5"/>
<dbReference type="FunCoup" id="Q86AV5">
    <property type="interactions" value="14"/>
</dbReference>
<dbReference type="STRING" id="44689.Q86AV5"/>
<dbReference type="PaxDb" id="44689-DDB0234131"/>
<dbReference type="EnsemblProtists" id="EAL68968">
    <property type="protein sequence ID" value="EAL68968"/>
    <property type="gene ID" value="DDB_G0276933"/>
</dbReference>
<dbReference type="GeneID" id="8620688"/>
<dbReference type="KEGG" id="ddi:DDB_G0276933"/>
<dbReference type="dictyBase" id="DDB_G0276933">
    <property type="gene designation" value="mcfX"/>
</dbReference>
<dbReference type="VEuPathDB" id="AmoebaDB:DDB_G0276933"/>
<dbReference type="eggNOG" id="KOG0751">
    <property type="taxonomic scope" value="Eukaryota"/>
</dbReference>
<dbReference type="HOGENOM" id="CLU_015166_3_4_1"/>
<dbReference type="InParanoid" id="Q86AV5"/>
<dbReference type="OMA" id="QRLYTSM"/>
<dbReference type="PhylomeDB" id="Q86AV5"/>
<dbReference type="PRO" id="PR:Q86AV5"/>
<dbReference type="Proteomes" id="UP000002195">
    <property type="component" value="Chromosome 2"/>
</dbReference>
<dbReference type="GO" id="GO:0005743">
    <property type="term" value="C:mitochondrial inner membrane"/>
    <property type="evidence" value="ECO:0007669"/>
    <property type="project" value="UniProtKB-SubCell"/>
</dbReference>
<dbReference type="GO" id="GO:0022857">
    <property type="term" value="F:transmembrane transporter activity"/>
    <property type="evidence" value="ECO:0000318"/>
    <property type="project" value="GO_Central"/>
</dbReference>
<dbReference type="FunFam" id="1.50.40.10:FF:000004">
    <property type="entry name" value="Calcium-binding mitochondrial carrier protein Aralar1"/>
    <property type="match status" value="1"/>
</dbReference>
<dbReference type="Gene3D" id="1.50.40.10">
    <property type="entry name" value="Mitochondrial carrier domain"/>
    <property type="match status" value="1"/>
</dbReference>
<dbReference type="InterPro" id="IPR002067">
    <property type="entry name" value="Mit_carrier"/>
</dbReference>
<dbReference type="InterPro" id="IPR051028">
    <property type="entry name" value="Mito_Solute_Carrier"/>
</dbReference>
<dbReference type="InterPro" id="IPR018108">
    <property type="entry name" value="Mitochondrial_sb/sol_carrier"/>
</dbReference>
<dbReference type="InterPro" id="IPR023395">
    <property type="entry name" value="Mt_carrier_dom_sf"/>
</dbReference>
<dbReference type="PANTHER" id="PTHR45678">
    <property type="entry name" value="MITOCHONDRIAL 2-OXODICARBOXYLATE CARRIER 1-RELATED"/>
    <property type="match status" value="1"/>
</dbReference>
<dbReference type="PANTHER" id="PTHR45678:SF15">
    <property type="entry name" value="MITOCHONDRIAL SUBSTRATE CARRIER FAMILY PROTEIN X"/>
    <property type="match status" value="1"/>
</dbReference>
<dbReference type="Pfam" id="PF00153">
    <property type="entry name" value="Mito_carr"/>
    <property type="match status" value="3"/>
</dbReference>
<dbReference type="PRINTS" id="PR00926">
    <property type="entry name" value="MITOCARRIER"/>
</dbReference>
<dbReference type="SUPFAM" id="SSF103506">
    <property type="entry name" value="Mitochondrial carrier"/>
    <property type="match status" value="1"/>
</dbReference>
<dbReference type="PROSITE" id="PS50920">
    <property type="entry name" value="SOLCAR"/>
    <property type="match status" value="3"/>
</dbReference>
<protein>
    <recommendedName>
        <fullName>Mitochondrial substrate carrier family protein X</fullName>
    </recommendedName>
</protein>